<reference key="1">
    <citation type="journal article" date="1996" name="J. Bacteriol.">
        <title>Identification and characterization of additional flagellin genes from Vibrio anguillarum.</title>
        <authorList>
            <person name="McGee K."/>
            <person name="Hoerstedt P."/>
            <person name="Milton D.L."/>
        </authorList>
    </citation>
    <scope>NUCLEOTIDE SEQUENCE [GENOMIC DNA]</scope>
    <source>
        <strain>NB10 / Serotype O1</strain>
    </source>
</reference>
<reference key="2">
    <citation type="journal article" date="1996" name="J. Bacteriol.">
        <title>Flagellin A is essential for the virulence of Vibrio anguillarum.</title>
        <authorList>
            <person name="Milton D.L."/>
            <person name="O'Toole R."/>
            <person name="Hoerstedt P."/>
            <person name="Wolf-Watz H."/>
        </authorList>
    </citation>
    <scope>PROTEIN SEQUENCE OF 2-18</scope>
    <source>
        <strain>NB10 / Serotype O1</strain>
    </source>
</reference>
<dbReference type="EMBL" id="U52198">
    <property type="protein sequence ID" value="AAB09435.1"/>
    <property type="molecule type" value="Genomic_DNA"/>
</dbReference>
<dbReference type="RefSeq" id="WP_026028066.1">
    <property type="nucleotide sequence ID" value="NZ_VTYO01000013.1"/>
</dbReference>
<dbReference type="SMR" id="Q56572"/>
<dbReference type="STRING" id="55601.AA407_04205"/>
<dbReference type="PATRIC" id="fig|882102.3.peg.1030"/>
<dbReference type="GO" id="GO:0009288">
    <property type="term" value="C:bacterial-type flagellum"/>
    <property type="evidence" value="ECO:0007669"/>
    <property type="project" value="UniProtKB-SubCell"/>
</dbReference>
<dbReference type="GO" id="GO:0005576">
    <property type="term" value="C:extracellular region"/>
    <property type="evidence" value="ECO:0007669"/>
    <property type="project" value="UniProtKB-SubCell"/>
</dbReference>
<dbReference type="GO" id="GO:0005198">
    <property type="term" value="F:structural molecule activity"/>
    <property type="evidence" value="ECO:0007669"/>
    <property type="project" value="InterPro"/>
</dbReference>
<dbReference type="GO" id="GO:0010628">
    <property type="term" value="P:positive regulation of gene expression"/>
    <property type="evidence" value="ECO:0000314"/>
    <property type="project" value="AgBase"/>
</dbReference>
<dbReference type="GO" id="GO:0032757">
    <property type="term" value="P:positive regulation of interleukin-8 production"/>
    <property type="evidence" value="ECO:0000314"/>
    <property type="project" value="AgBase"/>
</dbReference>
<dbReference type="FunFam" id="1.20.1330.10:FF:000002">
    <property type="entry name" value="Flagellin"/>
    <property type="match status" value="1"/>
</dbReference>
<dbReference type="Gene3D" id="3.30.70.2120">
    <property type="match status" value="1"/>
</dbReference>
<dbReference type="Gene3D" id="1.20.1330.10">
    <property type="entry name" value="f41 fragment of flagellin, N-terminal domain"/>
    <property type="match status" value="1"/>
</dbReference>
<dbReference type="Gene3D" id="6.10.10.10">
    <property type="entry name" value="Flagellar export chaperone, C-terminal domain"/>
    <property type="match status" value="1"/>
</dbReference>
<dbReference type="InterPro" id="IPR001492">
    <property type="entry name" value="Flagellin"/>
</dbReference>
<dbReference type="InterPro" id="IPR046358">
    <property type="entry name" value="Flagellin_C"/>
</dbReference>
<dbReference type="InterPro" id="IPR042187">
    <property type="entry name" value="Flagellin_C_sub2"/>
</dbReference>
<dbReference type="InterPro" id="IPR010810">
    <property type="entry name" value="Flagellin_hook_IN_motif"/>
</dbReference>
<dbReference type="InterPro" id="IPR001029">
    <property type="entry name" value="Flagellin_N"/>
</dbReference>
<dbReference type="NCBIfam" id="NF006466">
    <property type="entry name" value="PRK08869.1-1"/>
    <property type="match status" value="1"/>
</dbReference>
<dbReference type="NCBIfam" id="NF006468">
    <property type="entry name" value="PRK08869.1-3"/>
    <property type="match status" value="1"/>
</dbReference>
<dbReference type="PANTHER" id="PTHR42792">
    <property type="entry name" value="FLAGELLIN"/>
    <property type="match status" value="1"/>
</dbReference>
<dbReference type="PANTHER" id="PTHR42792:SF2">
    <property type="entry name" value="FLAGELLIN"/>
    <property type="match status" value="1"/>
</dbReference>
<dbReference type="Pfam" id="PF00700">
    <property type="entry name" value="Flagellin_C"/>
    <property type="match status" value="1"/>
</dbReference>
<dbReference type="Pfam" id="PF07196">
    <property type="entry name" value="Flagellin_IN"/>
    <property type="match status" value="1"/>
</dbReference>
<dbReference type="Pfam" id="PF00669">
    <property type="entry name" value="Flagellin_N"/>
    <property type="match status" value="1"/>
</dbReference>
<dbReference type="PRINTS" id="PR00207">
    <property type="entry name" value="FLAGELLIN"/>
</dbReference>
<dbReference type="SUPFAM" id="SSF64518">
    <property type="entry name" value="Phase 1 flagellin"/>
    <property type="match status" value="1"/>
</dbReference>
<evidence type="ECO:0000255" key="1"/>
<evidence type="ECO:0000269" key="2">
    <source>
    </source>
</evidence>
<evidence type="ECO:0000305" key="3"/>
<feature type="initiator methionine" description="Removed" evidence="2">
    <location>
        <position position="1"/>
    </location>
</feature>
<feature type="chain" id="PRO_0000182644" description="Flagellin B">
    <location>
        <begin position="2"/>
        <end position="376"/>
    </location>
</feature>
<feature type="coiled-coil region" evidence="1">
    <location>
        <begin position="103"/>
        <end position="130"/>
    </location>
</feature>
<proteinExistence type="evidence at protein level"/>
<comment type="function">
    <text>Flagellin is the subunit protein which polymerizes to form the filaments of bacterial flagella. FlaB is not essential for flagellar synthesis and motility.</text>
</comment>
<comment type="subunit">
    <text>Heteromer of multiple flagellin subunits including FlaA, FlaB, FlaC, FlaD and possibly FlaE.</text>
</comment>
<comment type="subcellular location">
    <subcellularLocation>
        <location>Secreted</location>
    </subcellularLocation>
    <subcellularLocation>
        <location>Bacterial flagellum</location>
    </subcellularLocation>
</comment>
<comment type="similarity">
    <text evidence="3">Belongs to the bacterial flagellin family.</text>
</comment>
<sequence>MAINVSTNVSAMTAQRYLNNAADGTQKSMERLSSGYKINSARDDAAGLQISNRLTSQSRGLDMAVRNANDGISIAQTAEGAMNETTNILQRMRDLSLQSANGSNSSSERQAIQEEVSALNDELNRIAETTSFGGNKLLNGSFGNKSFQIGADSGEAVMLSMSDMRSDTKAMGGKSYVATNGKAPDWSVTNATDLTLSYTDKQGEAREVTINAKAGDDLEEVATYINGQNGDIKASVGDEGKLQLFAANQKVSSDVTIGGGLGTEIGFAAGKDVTVKDINVTTVGGSQEAVALIDGALKAVDSQRASLGAFQNRFGHAISNLDNINENVNASRSRIKDTDYARETTQMTKSQILQQASTSVLAQAKQSPSAALSLLG</sequence>
<keyword id="KW-0975">Bacterial flagellum</keyword>
<keyword id="KW-0175">Coiled coil</keyword>
<keyword id="KW-0903">Direct protein sequencing</keyword>
<keyword id="KW-0964">Secreted</keyword>
<organism>
    <name type="scientific">Vibrio anguillarum</name>
    <name type="common">Listonella anguillarum</name>
    <dbReference type="NCBI Taxonomy" id="55601"/>
    <lineage>
        <taxon>Bacteria</taxon>
        <taxon>Pseudomonadati</taxon>
        <taxon>Pseudomonadota</taxon>
        <taxon>Gammaproteobacteria</taxon>
        <taxon>Vibrionales</taxon>
        <taxon>Vibrionaceae</taxon>
        <taxon>Vibrio</taxon>
    </lineage>
</organism>
<protein>
    <recommendedName>
        <fullName>Flagellin B</fullName>
    </recommendedName>
</protein>
<accession>Q56572</accession>
<name>FLAB_VIBAN</name>
<gene>
    <name type="primary">flaB</name>
</gene>